<sequence length="429" mass="48960">MAAAAAVVTPSGLEDEVSRSRGEGAGEMVVERGPGAAYHMFVVMEDLVEKLKLLRYEENLLRKNNLKPPSRHYFALPTNPGEQFYMFCTLAAWLINKAGRPFEQPQEYDDPNAIISNILSELRSFGRTADFPPSKLKSGYGEHVCYVLDCLAEEALKYIGFTWKRPAYPVEELEEETVAEDDAELTLNKVDEEFVEEETDNEENFIDLNVLKAQTYRLDMNESAKQEDILESTTDAAEWSLEVERVLPQLKVTIRTDNKDWRIHVDQMHQHKSGIESALKETKGFLDRLHNEISRTLEKIGSREKYINNQLEHLVQEYRAAQAQLSEARERYQQGNGGVTERTRILSEVTEELEKVKQEMEEKGSSMTDGAPLVKIKQSLTKLKQETVQMDIRIGVVEHTLLQSKLKEKSNMTRDMHATIIPESAIGSY</sequence>
<protein>
    <recommendedName>
        <fullName>Intraflagellar transport protein 57 homolog</fullName>
    </recommendedName>
</protein>
<gene>
    <name type="primary">IFT57</name>
</gene>
<accession>Q5EA95</accession>
<proteinExistence type="evidence at protein level"/>
<evidence type="ECO:0000250" key="1"/>
<evidence type="ECO:0000250" key="2">
    <source>
        <dbReference type="UniProtKB" id="Q8BXG3"/>
    </source>
</evidence>
<evidence type="ECO:0000250" key="3">
    <source>
        <dbReference type="UniProtKB" id="Q9NWB7"/>
    </source>
</evidence>
<evidence type="ECO:0000255" key="4"/>
<evidence type="ECO:0000256" key="5">
    <source>
        <dbReference type="SAM" id="MobiDB-lite"/>
    </source>
</evidence>
<evidence type="ECO:0000269" key="6">
    <source>
    </source>
</evidence>
<evidence type="ECO:0000305" key="7"/>
<reference key="1">
    <citation type="journal article" date="2005" name="BMC Genomics">
        <title>Characterization of 954 bovine full-CDS cDNA sequences.</title>
        <authorList>
            <person name="Harhay G.P."/>
            <person name="Sonstegard T.S."/>
            <person name="Keele J.W."/>
            <person name="Heaton M.P."/>
            <person name="Clawson M.L."/>
            <person name="Snelling W.M."/>
            <person name="Wiedmann R.T."/>
            <person name="Van Tassell C.P."/>
            <person name="Smith T.P.L."/>
        </authorList>
    </citation>
    <scope>NUCLEOTIDE SEQUENCE [LARGE SCALE MRNA]</scope>
</reference>
<reference key="2">
    <citation type="submission" date="2007-07" db="EMBL/GenBank/DDBJ databases">
        <authorList>
            <consortium name="NIH - Mammalian Gene Collection (MGC) project"/>
        </authorList>
    </citation>
    <scope>NUCLEOTIDE SEQUENCE [LARGE SCALE MRNA]</scope>
    <source>
        <strain>Hereford</strain>
        <tissue>Thalamus</tissue>
    </source>
</reference>
<reference key="3">
    <citation type="journal article" date="2002" name="J. Cell Biol.">
        <title>The intraflagellar transport protein, IFT88, is essential for vertebrate photoreceptor assembly and maintenance.</title>
        <authorList>
            <person name="Pazour G.J."/>
            <person name="Baker S.A."/>
            <person name="Deane J.A."/>
            <person name="Cole D.G."/>
            <person name="Dickert B.L."/>
            <person name="Rosenbaum J.L."/>
            <person name="Witman G.B."/>
            <person name="Besharse J.C."/>
        </authorList>
    </citation>
    <scope>SUBCELLULAR LOCATION</scope>
    <scope>TISSUE SPECIFICITY</scope>
</reference>
<dbReference type="EMBL" id="BT020674">
    <property type="protein sequence ID" value="AAX08691.1"/>
    <property type="molecule type" value="mRNA"/>
</dbReference>
<dbReference type="EMBL" id="BC151565">
    <property type="protein sequence ID" value="AAI51566.1"/>
    <property type="molecule type" value="mRNA"/>
</dbReference>
<dbReference type="RefSeq" id="NP_001098873.1">
    <property type="nucleotide sequence ID" value="NM_001105403.1"/>
</dbReference>
<dbReference type="SMR" id="Q5EA95"/>
<dbReference type="FunCoup" id="Q5EA95">
    <property type="interactions" value="850"/>
</dbReference>
<dbReference type="STRING" id="9913.ENSBTAP00000007606"/>
<dbReference type="PaxDb" id="9913-ENSBTAP00000007606"/>
<dbReference type="GeneID" id="531436"/>
<dbReference type="KEGG" id="bta:531436"/>
<dbReference type="CTD" id="55081"/>
<dbReference type="eggNOG" id="KOG0972">
    <property type="taxonomic scope" value="Eukaryota"/>
</dbReference>
<dbReference type="HOGENOM" id="CLU_039132_0_0_1"/>
<dbReference type="InParanoid" id="Q5EA95"/>
<dbReference type="OrthoDB" id="423881at2759"/>
<dbReference type="TreeFam" id="TF106156"/>
<dbReference type="Proteomes" id="UP000009136">
    <property type="component" value="Unplaced"/>
</dbReference>
<dbReference type="GO" id="GO:0036064">
    <property type="term" value="C:ciliary basal body"/>
    <property type="evidence" value="ECO:0000250"/>
    <property type="project" value="UniProtKB"/>
</dbReference>
<dbReference type="GO" id="GO:0097546">
    <property type="term" value="C:ciliary base"/>
    <property type="evidence" value="ECO:0000250"/>
    <property type="project" value="UniProtKB"/>
</dbReference>
<dbReference type="GO" id="GO:0005929">
    <property type="term" value="C:cilium"/>
    <property type="evidence" value="ECO:0000318"/>
    <property type="project" value="GO_Central"/>
</dbReference>
<dbReference type="GO" id="GO:0005794">
    <property type="term" value="C:Golgi apparatus"/>
    <property type="evidence" value="ECO:0000318"/>
    <property type="project" value="GO_Central"/>
</dbReference>
<dbReference type="GO" id="GO:0030992">
    <property type="term" value="C:intraciliary transport particle B"/>
    <property type="evidence" value="ECO:0000250"/>
    <property type="project" value="UniProtKB"/>
</dbReference>
<dbReference type="GO" id="GO:0005815">
    <property type="term" value="C:microtubule organizing center"/>
    <property type="evidence" value="ECO:0000318"/>
    <property type="project" value="GO_Central"/>
</dbReference>
<dbReference type="GO" id="GO:0032391">
    <property type="term" value="C:photoreceptor connecting cilium"/>
    <property type="evidence" value="ECO:0000250"/>
    <property type="project" value="UniProtKB"/>
</dbReference>
<dbReference type="GO" id="GO:0003677">
    <property type="term" value="F:DNA binding"/>
    <property type="evidence" value="ECO:0007669"/>
    <property type="project" value="UniProtKB-KW"/>
</dbReference>
<dbReference type="GO" id="GO:0006915">
    <property type="term" value="P:apoptotic process"/>
    <property type="evidence" value="ECO:0000250"/>
    <property type="project" value="UniProtKB"/>
</dbReference>
<dbReference type="GO" id="GO:0042073">
    <property type="term" value="P:intraciliary transport"/>
    <property type="evidence" value="ECO:0000318"/>
    <property type="project" value="GO_Central"/>
</dbReference>
<dbReference type="GO" id="GO:1905515">
    <property type="term" value="P:non-motile cilium assembly"/>
    <property type="evidence" value="ECO:0000318"/>
    <property type="project" value="GO_Central"/>
</dbReference>
<dbReference type="GO" id="GO:0042981">
    <property type="term" value="P:regulation of apoptotic process"/>
    <property type="evidence" value="ECO:0000250"/>
    <property type="project" value="UniProtKB"/>
</dbReference>
<dbReference type="InterPro" id="IPR019530">
    <property type="entry name" value="Intra-flagellar_transport_57"/>
</dbReference>
<dbReference type="PANTHER" id="PTHR16011">
    <property type="entry name" value="IFT57/HIPPI"/>
    <property type="match status" value="1"/>
</dbReference>
<dbReference type="PANTHER" id="PTHR16011:SF0">
    <property type="entry name" value="INTRAFLAGELLAR TRANSPORT PROTEIN 57 HOMOLOG"/>
    <property type="match status" value="1"/>
</dbReference>
<dbReference type="Pfam" id="PF10498">
    <property type="entry name" value="IFT57"/>
    <property type="match status" value="1"/>
</dbReference>
<organism>
    <name type="scientific">Bos taurus</name>
    <name type="common">Bovine</name>
    <dbReference type="NCBI Taxonomy" id="9913"/>
    <lineage>
        <taxon>Eukaryota</taxon>
        <taxon>Metazoa</taxon>
        <taxon>Chordata</taxon>
        <taxon>Craniata</taxon>
        <taxon>Vertebrata</taxon>
        <taxon>Euteleostomi</taxon>
        <taxon>Mammalia</taxon>
        <taxon>Eutheria</taxon>
        <taxon>Laurasiatheria</taxon>
        <taxon>Artiodactyla</taxon>
        <taxon>Ruminantia</taxon>
        <taxon>Pecora</taxon>
        <taxon>Bovidae</taxon>
        <taxon>Bovinae</taxon>
        <taxon>Bos</taxon>
    </lineage>
</organism>
<name>IFT57_BOVIN</name>
<comment type="function">
    <text evidence="1">Required for the formation of cilia. Plays an indirect role in sonic hedgehog signaling, cilia being required for all activity of the hedgehog pathway. Has pro-apoptotic function via its interaction with HIP1, leading to recruit caspase-8 (CASP8) and trigger apoptosis. Has the ability to bind DNA sequence motif 5'-AAAGACATG-3' present in the promoter of caspase genes such as CASP1, CASP8 and CASP10, suggesting that it may act as a transcription regulator; however the relevance of such function remains unclear (By similarity).</text>
</comment>
<comment type="subunit">
    <text evidence="2 3">Component of the IFT complex B, at least composed of IFT20, IFT22, IFT25, IFT27, IFT46, IFT52, TRAF3IP1/IFT54, IFT57, IFT74, IFT80, IFT81, and IFT88 (By similarity). Interacts with IFT20 (By similarity). Interacts with IFT88 (By similarity). Interacts with IFT80, IFT-81, IFT74, IFT172, IFT70B and KIF17 (By similarity). Interacts with BLOC1S2 (By similarity). Interacts with RYBP (By similarity). Interacts with HOMER1; the interaction possibly prevents the pro-apoptotic effects of IFT57 (By similarity). Interacts with HIP1 (By similarity). In normal conditions, it poorly interacts with HIP1, HIP1 being strongly associated with HTT (By similarity). However, in mutant HTT proteins with a long poly-Gln region, interaction between HTT and HIP1 is inhibited, promoting the interaction between HIP1 and IFT57, leading to apoptosis (By similarity). Interacts with BFAR (By similarity). Interacts with TTC25 (By similarity). Interacts with USH1G (By similarity).</text>
</comment>
<comment type="subcellular location">
    <subcellularLocation>
        <location evidence="2">Cell projection</location>
        <location evidence="2">Cilium</location>
    </subcellularLocation>
    <subcellularLocation>
        <location evidence="6">Cytoplasm</location>
        <location evidence="6">Cytoskeleton</location>
        <location evidence="6">Cilium basal body</location>
    </subcellularLocation>
    <text>Concentrates within the inner segment of cilia.</text>
</comment>
<comment type="tissue specificity">
    <text evidence="6">In retina, detected in the photoreceptor basal body and connecting cilium. Most abundant in the inner segment of photoreceptors (at protein level).</text>
</comment>
<comment type="domain">
    <text evidence="1">The pseudo DED region (pDED) mediates the interaction with HIP1.</text>
</comment>
<comment type="similarity">
    <text evidence="7">Belongs to the IFT57 family.</text>
</comment>
<feature type="chain" id="PRO_0000328883" description="Intraflagellar transport protein 57 homolog">
    <location>
        <begin position="1"/>
        <end position="429"/>
    </location>
</feature>
<feature type="region of interest" description="Disordered" evidence="5">
    <location>
        <begin position="1"/>
        <end position="26"/>
    </location>
</feature>
<feature type="region of interest" description="pDED">
    <location>
        <begin position="335"/>
        <end position="426"/>
    </location>
</feature>
<feature type="coiled-coil region" evidence="4">
    <location>
        <begin position="305"/>
        <end position="369"/>
    </location>
</feature>
<keyword id="KW-0053">Apoptosis</keyword>
<keyword id="KW-0966">Cell projection</keyword>
<keyword id="KW-0969">Cilium</keyword>
<keyword id="KW-0175">Coiled coil</keyword>
<keyword id="KW-0963">Cytoplasm</keyword>
<keyword id="KW-0206">Cytoskeleton</keyword>
<keyword id="KW-0238">DNA-binding</keyword>
<keyword id="KW-1185">Reference proteome</keyword>
<keyword id="KW-0804">Transcription</keyword>
<keyword id="KW-0805">Transcription regulation</keyword>